<feature type="chain" id="PRO_0000264476" description="DNA-directed RNA polymerase subunit alpha">
    <location>
        <begin position="1"/>
        <end position="368"/>
    </location>
</feature>
<feature type="region of interest" description="Alpha N-terminal domain (alpha-NTD)" evidence="1">
    <location>
        <begin position="1"/>
        <end position="231"/>
    </location>
</feature>
<feature type="region of interest" description="Alpha C-terminal domain (alpha-CTD)" evidence="1">
    <location>
        <begin position="243"/>
        <end position="368"/>
    </location>
</feature>
<accession>Q1IS93</accession>
<evidence type="ECO:0000255" key="1">
    <source>
        <dbReference type="HAMAP-Rule" id="MF_00059"/>
    </source>
</evidence>
<reference key="1">
    <citation type="journal article" date="2009" name="Appl. Environ. Microbiol.">
        <title>Three genomes from the phylum Acidobacteria provide insight into the lifestyles of these microorganisms in soils.</title>
        <authorList>
            <person name="Ward N.L."/>
            <person name="Challacombe J.F."/>
            <person name="Janssen P.H."/>
            <person name="Henrissat B."/>
            <person name="Coutinho P.M."/>
            <person name="Wu M."/>
            <person name="Xie G."/>
            <person name="Haft D.H."/>
            <person name="Sait M."/>
            <person name="Badger J."/>
            <person name="Barabote R.D."/>
            <person name="Bradley B."/>
            <person name="Brettin T.S."/>
            <person name="Brinkac L.M."/>
            <person name="Bruce D."/>
            <person name="Creasy T."/>
            <person name="Daugherty S.C."/>
            <person name="Davidsen T.M."/>
            <person name="DeBoy R.T."/>
            <person name="Detter J.C."/>
            <person name="Dodson R.J."/>
            <person name="Durkin A.S."/>
            <person name="Ganapathy A."/>
            <person name="Gwinn-Giglio M."/>
            <person name="Han C.S."/>
            <person name="Khouri H."/>
            <person name="Kiss H."/>
            <person name="Kothari S.P."/>
            <person name="Madupu R."/>
            <person name="Nelson K.E."/>
            <person name="Nelson W.C."/>
            <person name="Paulsen I."/>
            <person name="Penn K."/>
            <person name="Ren Q."/>
            <person name="Rosovitz M.J."/>
            <person name="Selengut J.D."/>
            <person name="Shrivastava S."/>
            <person name="Sullivan S.A."/>
            <person name="Tapia R."/>
            <person name="Thompson L.S."/>
            <person name="Watkins K.L."/>
            <person name="Yang Q."/>
            <person name="Yu C."/>
            <person name="Zafar N."/>
            <person name="Zhou L."/>
            <person name="Kuske C.R."/>
        </authorList>
    </citation>
    <scope>NUCLEOTIDE SEQUENCE [LARGE SCALE GENOMIC DNA]</scope>
    <source>
        <strain>Ellin345</strain>
    </source>
</reference>
<organism>
    <name type="scientific">Koribacter versatilis (strain Ellin345)</name>
    <dbReference type="NCBI Taxonomy" id="204669"/>
    <lineage>
        <taxon>Bacteria</taxon>
        <taxon>Pseudomonadati</taxon>
        <taxon>Acidobacteriota</taxon>
        <taxon>Terriglobia</taxon>
        <taxon>Terriglobales</taxon>
        <taxon>Candidatus Korobacteraceae</taxon>
        <taxon>Candidatus Korobacter</taxon>
    </lineage>
</organism>
<gene>
    <name evidence="1" type="primary">rpoA</name>
    <name type="ordered locus">Acid345_1255</name>
</gene>
<dbReference type="EC" id="2.7.7.6" evidence="1"/>
<dbReference type="EMBL" id="CP000360">
    <property type="protein sequence ID" value="ABF40257.1"/>
    <property type="molecule type" value="Genomic_DNA"/>
</dbReference>
<dbReference type="RefSeq" id="WP_011522059.1">
    <property type="nucleotide sequence ID" value="NC_008009.1"/>
</dbReference>
<dbReference type="SMR" id="Q1IS93"/>
<dbReference type="STRING" id="204669.Acid345_1255"/>
<dbReference type="EnsemblBacteria" id="ABF40257">
    <property type="protein sequence ID" value="ABF40257"/>
    <property type="gene ID" value="Acid345_1255"/>
</dbReference>
<dbReference type="KEGG" id="aba:Acid345_1255"/>
<dbReference type="eggNOG" id="COG0202">
    <property type="taxonomic scope" value="Bacteria"/>
</dbReference>
<dbReference type="HOGENOM" id="CLU_053084_0_1_0"/>
<dbReference type="OrthoDB" id="9805706at2"/>
<dbReference type="Proteomes" id="UP000002432">
    <property type="component" value="Chromosome"/>
</dbReference>
<dbReference type="GO" id="GO:0005737">
    <property type="term" value="C:cytoplasm"/>
    <property type="evidence" value="ECO:0007669"/>
    <property type="project" value="UniProtKB-ARBA"/>
</dbReference>
<dbReference type="GO" id="GO:0000428">
    <property type="term" value="C:DNA-directed RNA polymerase complex"/>
    <property type="evidence" value="ECO:0007669"/>
    <property type="project" value="UniProtKB-KW"/>
</dbReference>
<dbReference type="GO" id="GO:0003677">
    <property type="term" value="F:DNA binding"/>
    <property type="evidence" value="ECO:0007669"/>
    <property type="project" value="UniProtKB-UniRule"/>
</dbReference>
<dbReference type="GO" id="GO:0003899">
    <property type="term" value="F:DNA-directed RNA polymerase activity"/>
    <property type="evidence" value="ECO:0007669"/>
    <property type="project" value="UniProtKB-UniRule"/>
</dbReference>
<dbReference type="GO" id="GO:0046983">
    <property type="term" value="F:protein dimerization activity"/>
    <property type="evidence" value="ECO:0007669"/>
    <property type="project" value="InterPro"/>
</dbReference>
<dbReference type="GO" id="GO:0006351">
    <property type="term" value="P:DNA-templated transcription"/>
    <property type="evidence" value="ECO:0007669"/>
    <property type="project" value="UniProtKB-UniRule"/>
</dbReference>
<dbReference type="CDD" id="cd06928">
    <property type="entry name" value="RNAP_alpha_NTD"/>
    <property type="match status" value="1"/>
</dbReference>
<dbReference type="FunFam" id="1.10.150.20:FF:000001">
    <property type="entry name" value="DNA-directed RNA polymerase subunit alpha"/>
    <property type="match status" value="1"/>
</dbReference>
<dbReference type="FunFam" id="2.170.120.12:FF:000001">
    <property type="entry name" value="DNA-directed RNA polymerase subunit alpha"/>
    <property type="match status" value="1"/>
</dbReference>
<dbReference type="Gene3D" id="1.10.150.20">
    <property type="entry name" value="5' to 3' exonuclease, C-terminal subdomain"/>
    <property type="match status" value="1"/>
</dbReference>
<dbReference type="Gene3D" id="2.170.120.12">
    <property type="entry name" value="DNA-directed RNA polymerase, insert domain"/>
    <property type="match status" value="1"/>
</dbReference>
<dbReference type="Gene3D" id="3.30.1360.10">
    <property type="entry name" value="RNA polymerase, RBP11-like subunit"/>
    <property type="match status" value="1"/>
</dbReference>
<dbReference type="HAMAP" id="MF_00059">
    <property type="entry name" value="RNApol_bact_RpoA"/>
    <property type="match status" value="1"/>
</dbReference>
<dbReference type="InterPro" id="IPR011262">
    <property type="entry name" value="DNA-dir_RNA_pol_insert"/>
</dbReference>
<dbReference type="InterPro" id="IPR011263">
    <property type="entry name" value="DNA-dir_RNA_pol_RpoA/D/Rpb3"/>
</dbReference>
<dbReference type="InterPro" id="IPR011773">
    <property type="entry name" value="DNA-dir_RpoA"/>
</dbReference>
<dbReference type="InterPro" id="IPR036603">
    <property type="entry name" value="RBP11-like"/>
</dbReference>
<dbReference type="InterPro" id="IPR011260">
    <property type="entry name" value="RNAP_asu_C"/>
</dbReference>
<dbReference type="InterPro" id="IPR036643">
    <property type="entry name" value="RNApol_insert_sf"/>
</dbReference>
<dbReference type="NCBIfam" id="NF003513">
    <property type="entry name" value="PRK05182.1-2"/>
    <property type="match status" value="1"/>
</dbReference>
<dbReference type="NCBIfam" id="NF003519">
    <property type="entry name" value="PRK05182.2-5"/>
    <property type="match status" value="1"/>
</dbReference>
<dbReference type="NCBIfam" id="TIGR02027">
    <property type="entry name" value="rpoA"/>
    <property type="match status" value="1"/>
</dbReference>
<dbReference type="Pfam" id="PF01000">
    <property type="entry name" value="RNA_pol_A_bac"/>
    <property type="match status" value="1"/>
</dbReference>
<dbReference type="Pfam" id="PF03118">
    <property type="entry name" value="RNA_pol_A_CTD"/>
    <property type="match status" value="1"/>
</dbReference>
<dbReference type="Pfam" id="PF01193">
    <property type="entry name" value="RNA_pol_L"/>
    <property type="match status" value="1"/>
</dbReference>
<dbReference type="SMART" id="SM00662">
    <property type="entry name" value="RPOLD"/>
    <property type="match status" value="1"/>
</dbReference>
<dbReference type="SUPFAM" id="SSF47789">
    <property type="entry name" value="C-terminal domain of RNA polymerase alpha subunit"/>
    <property type="match status" value="1"/>
</dbReference>
<dbReference type="SUPFAM" id="SSF56553">
    <property type="entry name" value="Insert subdomain of RNA polymerase alpha subunit"/>
    <property type="match status" value="1"/>
</dbReference>
<dbReference type="SUPFAM" id="SSF55257">
    <property type="entry name" value="RBP11-like subunits of RNA polymerase"/>
    <property type="match status" value="1"/>
</dbReference>
<keyword id="KW-0240">DNA-directed RNA polymerase</keyword>
<keyword id="KW-0548">Nucleotidyltransferase</keyword>
<keyword id="KW-1185">Reference proteome</keyword>
<keyword id="KW-0804">Transcription</keyword>
<keyword id="KW-0808">Transferase</keyword>
<name>RPOA_KORVE</name>
<protein>
    <recommendedName>
        <fullName evidence="1">DNA-directed RNA polymerase subunit alpha</fullName>
        <shortName evidence="1">RNAP subunit alpha</shortName>
        <ecNumber evidence="1">2.7.7.6</ecNumber>
    </recommendedName>
    <alternativeName>
        <fullName evidence="1">RNA polymerase subunit alpha</fullName>
    </alternativeName>
    <alternativeName>
        <fullName evidence="1">Transcriptase subunit alpha</fullName>
    </alternativeName>
</protein>
<sequence>MLWKGFQKPKRLAFDSESLTDKYGHFWAQPFERGFGTTIGNALRRVLLSSIEGAAITAVKIEGVLHEFQSIPGVVEDATDIILNLKQIPFRLNGDAPKAIYLRAEQPGIVTSGMIETDADVEILDKDVYIATISEGGKLDMEMRLKKGRGYVSADKNFDEDLGLGFIPIDSVHSPVRKCNYSVEAARLGQITDYDKLSIELWTNGSVNPADALGLAAKLLKDHMNIFINFEEEIEASHAEDRKPEIRNENLNRSVEELELSVRSYNCLKNANIQTIGELVQKTEAEMLKTKNFGRKSLNEIKEILASMGLSLGMKIDEHGNAVAPPPGSQPAPSYGGYPGSYGTGGTFGGGGNYGGGGGFGGDNNPGF</sequence>
<comment type="function">
    <text evidence="1">DNA-dependent RNA polymerase catalyzes the transcription of DNA into RNA using the four ribonucleoside triphosphates as substrates.</text>
</comment>
<comment type="catalytic activity">
    <reaction evidence="1">
        <text>RNA(n) + a ribonucleoside 5'-triphosphate = RNA(n+1) + diphosphate</text>
        <dbReference type="Rhea" id="RHEA:21248"/>
        <dbReference type="Rhea" id="RHEA-COMP:14527"/>
        <dbReference type="Rhea" id="RHEA-COMP:17342"/>
        <dbReference type="ChEBI" id="CHEBI:33019"/>
        <dbReference type="ChEBI" id="CHEBI:61557"/>
        <dbReference type="ChEBI" id="CHEBI:140395"/>
        <dbReference type="EC" id="2.7.7.6"/>
    </reaction>
</comment>
<comment type="subunit">
    <text evidence="1">Homodimer. The RNAP catalytic core consists of 2 alpha, 1 beta, 1 beta' and 1 omega subunit. When a sigma factor is associated with the core the holoenzyme is formed, which can initiate transcription.</text>
</comment>
<comment type="domain">
    <text evidence="1">The N-terminal domain is essential for RNAP assembly and basal transcription, whereas the C-terminal domain is involved in interaction with transcriptional regulators and with upstream promoter elements.</text>
</comment>
<comment type="similarity">
    <text evidence="1">Belongs to the RNA polymerase alpha chain family.</text>
</comment>
<proteinExistence type="inferred from homology"/>